<reference key="1">
    <citation type="journal article" date="2006" name="Nat. Biotechnol.">
        <title>Genome sequence of the ubiquitous hydrocarbon-degrading marine bacterium Alcanivorax borkumensis.</title>
        <authorList>
            <person name="Schneiker S."/>
            <person name="Martins dos Santos V.A.P."/>
            <person name="Bartels D."/>
            <person name="Bekel T."/>
            <person name="Brecht M."/>
            <person name="Buhrmester J."/>
            <person name="Chernikova T.N."/>
            <person name="Denaro R."/>
            <person name="Ferrer M."/>
            <person name="Gertler C."/>
            <person name="Goesmann A."/>
            <person name="Golyshina O.V."/>
            <person name="Kaminski F."/>
            <person name="Khachane A.N."/>
            <person name="Lang S."/>
            <person name="Linke B."/>
            <person name="McHardy A.C."/>
            <person name="Meyer F."/>
            <person name="Nechitaylo T."/>
            <person name="Puehler A."/>
            <person name="Regenhardt D."/>
            <person name="Rupp O."/>
            <person name="Sabirova J.S."/>
            <person name="Selbitschka W."/>
            <person name="Yakimov M.M."/>
            <person name="Timmis K.N."/>
            <person name="Vorhoelter F.-J."/>
            <person name="Weidner S."/>
            <person name="Kaiser O."/>
            <person name="Golyshin P.N."/>
        </authorList>
    </citation>
    <scope>NUCLEOTIDE SEQUENCE [LARGE SCALE GENOMIC DNA]</scope>
    <source>
        <strain>ATCC 700651 / DSM 11573 / NCIMB 13689 / SK2</strain>
    </source>
</reference>
<dbReference type="EC" id="1.6.5.-" evidence="1"/>
<dbReference type="EC" id="1.7.1.17" evidence="1"/>
<dbReference type="EMBL" id="AM286690">
    <property type="protein sequence ID" value="CAL15475.1"/>
    <property type="molecule type" value="Genomic_DNA"/>
</dbReference>
<dbReference type="RefSeq" id="WP_011587325.1">
    <property type="nucleotide sequence ID" value="NC_008260.1"/>
</dbReference>
<dbReference type="SMR" id="Q0VTN3"/>
<dbReference type="STRING" id="393595.ABO_0027"/>
<dbReference type="KEGG" id="abo:ABO_0027"/>
<dbReference type="eggNOG" id="COG1182">
    <property type="taxonomic scope" value="Bacteria"/>
</dbReference>
<dbReference type="HOGENOM" id="CLU_088964_0_0_6"/>
<dbReference type="OrthoDB" id="9787136at2"/>
<dbReference type="Proteomes" id="UP000008871">
    <property type="component" value="Chromosome"/>
</dbReference>
<dbReference type="GO" id="GO:0009055">
    <property type="term" value="F:electron transfer activity"/>
    <property type="evidence" value="ECO:0007669"/>
    <property type="project" value="UniProtKB-UniRule"/>
</dbReference>
<dbReference type="GO" id="GO:0010181">
    <property type="term" value="F:FMN binding"/>
    <property type="evidence" value="ECO:0007669"/>
    <property type="project" value="UniProtKB-UniRule"/>
</dbReference>
<dbReference type="GO" id="GO:0016652">
    <property type="term" value="F:oxidoreductase activity, acting on NAD(P)H as acceptor"/>
    <property type="evidence" value="ECO:0007669"/>
    <property type="project" value="UniProtKB-UniRule"/>
</dbReference>
<dbReference type="GO" id="GO:0016655">
    <property type="term" value="F:oxidoreductase activity, acting on NAD(P)H, quinone or similar compound as acceptor"/>
    <property type="evidence" value="ECO:0007669"/>
    <property type="project" value="InterPro"/>
</dbReference>
<dbReference type="Gene3D" id="3.40.50.360">
    <property type="match status" value="1"/>
</dbReference>
<dbReference type="HAMAP" id="MF_01216">
    <property type="entry name" value="Azoreductase_type1"/>
    <property type="match status" value="1"/>
</dbReference>
<dbReference type="InterPro" id="IPR003680">
    <property type="entry name" value="Flavodoxin_fold"/>
</dbReference>
<dbReference type="InterPro" id="IPR029039">
    <property type="entry name" value="Flavoprotein-like_sf"/>
</dbReference>
<dbReference type="InterPro" id="IPR050104">
    <property type="entry name" value="FMN-dep_NADH:Q_OxRdtase_AzoR1"/>
</dbReference>
<dbReference type="InterPro" id="IPR023048">
    <property type="entry name" value="NADH:quinone_OxRdtase_FMN_depd"/>
</dbReference>
<dbReference type="PANTHER" id="PTHR43741">
    <property type="entry name" value="FMN-DEPENDENT NADH-AZOREDUCTASE 1"/>
    <property type="match status" value="1"/>
</dbReference>
<dbReference type="PANTHER" id="PTHR43741:SF2">
    <property type="entry name" value="FMN-DEPENDENT NADH:QUINONE OXIDOREDUCTASE"/>
    <property type="match status" value="1"/>
</dbReference>
<dbReference type="Pfam" id="PF02525">
    <property type="entry name" value="Flavodoxin_2"/>
    <property type="match status" value="1"/>
</dbReference>
<dbReference type="SUPFAM" id="SSF52218">
    <property type="entry name" value="Flavoproteins"/>
    <property type="match status" value="1"/>
</dbReference>
<comment type="function">
    <text evidence="1">Quinone reductase that provides resistance to thiol-specific stress caused by electrophilic quinones.</text>
</comment>
<comment type="function">
    <text evidence="1">Also exhibits azoreductase activity. Catalyzes the reductive cleavage of the azo bond in aromatic azo compounds to the corresponding amines.</text>
</comment>
<comment type="catalytic activity">
    <reaction evidence="1">
        <text>2 a quinone + NADH + H(+) = 2 a 1,4-benzosemiquinone + NAD(+)</text>
        <dbReference type="Rhea" id="RHEA:65952"/>
        <dbReference type="ChEBI" id="CHEBI:15378"/>
        <dbReference type="ChEBI" id="CHEBI:57540"/>
        <dbReference type="ChEBI" id="CHEBI:57945"/>
        <dbReference type="ChEBI" id="CHEBI:132124"/>
        <dbReference type="ChEBI" id="CHEBI:134225"/>
    </reaction>
</comment>
<comment type="catalytic activity">
    <reaction evidence="1">
        <text>N,N-dimethyl-1,4-phenylenediamine + anthranilate + 2 NAD(+) = 2-(4-dimethylaminophenyl)diazenylbenzoate + 2 NADH + 2 H(+)</text>
        <dbReference type="Rhea" id="RHEA:55872"/>
        <dbReference type="ChEBI" id="CHEBI:15378"/>
        <dbReference type="ChEBI" id="CHEBI:15783"/>
        <dbReference type="ChEBI" id="CHEBI:16567"/>
        <dbReference type="ChEBI" id="CHEBI:57540"/>
        <dbReference type="ChEBI" id="CHEBI:57945"/>
        <dbReference type="ChEBI" id="CHEBI:71579"/>
        <dbReference type="EC" id="1.7.1.17"/>
    </reaction>
</comment>
<comment type="cofactor">
    <cofactor evidence="1">
        <name>FMN</name>
        <dbReference type="ChEBI" id="CHEBI:58210"/>
    </cofactor>
    <text evidence="1">Binds 1 FMN per subunit.</text>
</comment>
<comment type="subunit">
    <text evidence="1">Homodimer.</text>
</comment>
<comment type="similarity">
    <text evidence="1">Belongs to the azoreductase type 1 family.</text>
</comment>
<name>AZOR_ALCBS</name>
<gene>
    <name evidence="1" type="primary">azoR</name>
    <name type="ordered locus">ABO_0027</name>
</gene>
<organism>
    <name type="scientific">Alcanivorax borkumensis (strain ATCC 700651 / DSM 11573 / NCIMB 13689 / SK2)</name>
    <dbReference type="NCBI Taxonomy" id="393595"/>
    <lineage>
        <taxon>Bacteria</taxon>
        <taxon>Pseudomonadati</taxon>
        <taxon>Pseudomonadota</taxon>
        <taxon>Gammaproteobacteria</taxon>
        <taxon>Oceanospirillales</taxon>
        <taxon>Alcanivoracaceae</taxon>
        <taxon>Alcanivorax</taxon>
    </lineage>
</organism>
<accession>Q0VTN3</accession>
<feature type="chain" id="PRO_1000066491" description="FMN-dependent NADH:quinone oxidoreductase">
    <location>
        <begin position="1"/>
        <end position="198"/>
    </location>
</feature>
<feature type="binding site" evidence="1">
    <location>
        <position position="9"/>
    </location>
    <ligand>
        <name>FMN</name>
        <dbReference type="ChEBI" id="CHEBI:58210"/>
    </ligand>
</feature>
<feature type="binding site" evidence="1">
    <location>
        <begin position="95"/>
        <end position="98"/>
    </location>
    <ligand>
        <name>FMN</name>
        <dbReference type="ChEBI" id="CHEBI:58210"/>
    </ligand>
</feature>
<evidence type="ECO:0000255" key="1">
    <source>
        <dbReference type="HAMAP-Rule" id="MF_01216"/>
    </source>
</evidence>
<sequence length="198" mass="21367">MNILVIKSSVFGDNGNSSALVNAQVDALKAKHPQATVRVRDLSTDPIPHLDGNRVSAFFTSATQRTDEQQAIDAFSLALIDEIKAADHIVLGLPMYNFGIPSQLKSWIDHVARAGITFRYTEKGPQGLLENKPVTVLAARGGIYAGTSNDTVTPYIKLFFGFIGITDVEFVFAEGLNMGDDVKEKALAVARSELLAST</sequence>
<keyword id="KW-0285">Flavoprotein</keyword>
<keyword id="KW-0288">FMN</keyword>
<keyword id="KW-0520">NAD</keyword>
<keyword id="KW-0560">Oxidoreductase</keyword>
<keyword id="KW-1185">Reference proteome</keyword>
<proteinExistence type="inferred from homology"/>
<protein>
    <recommendedName>
        <fullName evidence="1">FMN-dependent NADH:quinone oxidoreductase</fullName>
        <ecNumber evidence="1">1.6.5.-</ecNumber>
    </recommendedName>
    <alternativeName>
        <fullName evidence="1">Azo-dye reductase</fullName>
    </alternativeName>
    <alternativeName>
        <fullName evidence="1">FMN-dependent NADH-azo compound oxidoreductase</fullName>
    </alternativeName>
    <alternativeName>
        <fullName evidence="1">FMN-dependent NADH-azoreductase</fullName>
        <ecNumber evidence="1">1.7.1.17</ecNumber>
    </alternativeName>
</protein>